<comment type="catalytic activity">
    <reaction evidence="1">
        <text>tRNA(Leu) + L-leucine + ATP = L-leucyl-tRNA(Leu) + AMP + diphosphate</text>
        <dbReference type="Rhea" id="RHEA:11688"/>
        <dbReference type="Rhea" id="RHEA-COMP:9613"/>
        <dbReference type="Rhea" id="RHEA-COMP:9622"/>
        <dbReference type="ChEBI" id="CHEBI:30616"/>
        <dbReference type="ChEBI" id="CHEBI:33019"/>
        <dbReference type="ChEBI" id="CHEBI:57427"/>
        <dbReference type="ChEBI" id="CHEBI:78442"/>
        <dbReference type="ChEBI" id="CHEBI:78494"/>
        <dbReference type="ChEBI" id="CHEBI:456215"/>
        <dbReference type="EC" id="6.1.1.4"/>
    </reaction>
</comment>
<comment type="subcellular location">
    <subcellularLocation>
        <location evidence="1">Cytoplasm</location>
    </subcellularLocation>
</comment>
<comment type="similarity">
    <text evidence="1">Belongs to the class-I aminoacyl-tRNA synthetase family.</text>
</comment>
<comment type="sequence caution" evidence="2">
    <conflict type="erroneous initiation">
        <sequence resource="EMBL-CDS" id="ABG11489"/>
    </conflict>
</comment>
<evidence type="ECO:0000255" key="1">
    <source>
        <dbReference type="HAMAP-Rule" id="MF_00049"/>
    </source>
</evidence>
<evidence type="ECO:0000305" key="2"/>
<gene>
    <name evidence="1" type="primary">leuS</name>
    <name type="ordered locus">Mmcs_5389</name>
</gene>
<protein>
    <recommendedName>
        <fullName evidence="1">Leucine--tRNA ligase</fullName>
        <ecNumber evidence="1">6.1.1.4</ecNumber>
    </recommendedName>
    <alternativeName>
        <fullName evidence="1">Leucyl-tRNA synthetase</fullName>
        <shortName evidence="1">LeuRS</shortName>
    </alternativeName>
</protein>
<name>SYL_MYCSS</name>
<organism>
    <name type="scientific">Mycobacterium sp. (strain MCS)</name>
    <dbReference type="NCBI Taxonomy" id="164756"/>
    <lineage>
        <taxon>Bacteria</taxon>
        <taxon>Bacillati</taxon>
        <taxon>Actinomycetota</taxon>
        <taxon>Actinomycetes</taxon>
        <taxon>Mycobacteriales</taxon>
        <taxon>Mycobacteriaceae</taxon>
        <taxon>Mycobacterium</taxon>
    </lineage>
</organism>
<dbReference type="EC" id="6.1.1.4" evidence="1"/>
<dbReference type="EMBL" id="CP000384">
    <property type="protein sequence ID" value="ABG11489.1"/>
    <property type="status" value="ALT_INIT"/>
    <property type="molecule type" value="Genomic_DNA"/>
</dbReference>
<dbReference type="SMR" id="Q1B0U5"/>
<dbReference type="KEGG" id="mmc:Mmcs_5389"/>
<dbReference type="HOGENOM" id="CLU_004427_0_0_11"/>
<dbReference type="BioCyc" id="MSP164756:G1G6O-5501-MONOMER"/>
<dbReference type="GO" id="GO:0005829">
    <property type="term" value="C:cytosol"/>
    <property type="evidence" value="ECO:0007669"/>
    <property type="project" value="TreeGrafter"/>
</dbReference>
<dbReference type="GO" id="GO:0002161">
    <property type="term" value="F:aminoacyl-tRNA deacylase activity"/>
    <property type="evidence" value="ECO:0007669"/>
    <property type="project" value="InterPro"/>
</dbReference>
<dbReference type="GO" id="GO:0005524">
    <property type="term" value="F:ATP binding"/>
    <property type="evidence" value="ECO:0007669"/>
    <property type="project" value="UniProtKB-UniRule"/>
</dbReference>
<dbReference type="GO" id="GO:0004823">
    <property type="term" value="F:leucine-tRNA ligase activity"/>
    <property type="evidence" value="ECO:0007669"/>
    <property type="project" value="UniProtKB-UniRule"/>
</dbReference>
<dbReference type="GO" id="GO:0006429">
    <property type="term" value="P:leucyl-tRNA aminoacylation"/>
    <property type="evidence" value="ECO:0007669"/>
    <property type="project" value="UniProtKB-UniRule"/>
</dbReference>
<dbReference type="CDD" id="cd07958">
    <property type="entry name" value="Anticodon_Ia_Leu_BEm"/>
    <property type="match status" value="1"/>
</dbReference>
<dbReference type="FunFam" id="3.10.20.590:FF:000001">
    <property type="entry name" value="Leucine--tRNA ligase"/>
    <property type="match status" value="1"/>
</dbReference>
<dbReference type="FunFam" id="3.40.50.620:FF:000060">
    <property type="entry name" value="Leucine--tRNA ligase"/>
    <property type="match status" value="1"/>
</dbReference>
<dbReference type="FunFam" id="3.40.50.620:FF:000087">
    <property type="entry name" value="Leucine--tRNA ligase"/>
    <property type="match status" value="1"/>
</dbReference>
<dbReference type="FunFam" id="3.90.740.10:FF:000017">
    <property type="entry name" value="Leucine--tRNA ligase"/>
    <property type="match status" value="1"/>
</dbReference>
<dbReference type="FunFam" id="1.10.730.10:FF:000011">
    <property type="entry name" value="Leucine--tRNA ligase chloroplastic/mitochondrial"/>
    <property type="match status" value="1"/>
</dbReference>
<dbReference type="Gene3D" id="3.40.50.620">
    <property type="entry name" value="HUPs"/>
    <property type="match status" value="2"/>
</dbReference>
<dbReference type="Gene3D" id="1.10.730.10">
    <property type="entry name" value="Isoleucyl-tRNA Synthetase, Domain 1"/>
    <property type="match status" value="2"/>
</dbReference>
<dbReference type="Gene3D" id="3.90.740.10">
    <property type="entry name" value="Valyl/Leucyl/Isoleucyl-tRNA synthetase, editing domain"/>
    <property type="match status" value="1"/>
</dbReference>
<dbReference type="HAMAP" id="MF_00049_B">
    <property type="entry name" value="Leu_tRNA_synth_B"/>
    <property type="match status" value="1"/>
</dbReference>
<dbReference type="InterPro" id="IPR001412">
    <property type="entry name" value="aa-tRNA-synth_I_CS"/>
</dbReference>
<dbReference type="InterPro" id="IPR002302">
    <property type="entry name" value="Leu-tRNA-ligase"/>
</dbReference>
<dbReference type="InterPro" id="IPR025709">
    <property type="entry name" value="Leu_tRNA-synth_edit"/>
</dbReference>
<dbReference type="InterPro" id="IPR013155">
    <property type="entry name" value="M/V/L/I-tRNA-synth_anticd-bd"/>
</dbReference>
<dbReference type="InterPro" id="IPR015413">
    <property type="entry name" value="Methionyl/Leucyl_tRNA_Synth"/>
</dbReference>
<dbReference type="InterPro" id="IPR014729">
    <property type="entry name" value="Rossmann-like_a/b/a_fold"/>
</dbReference>
<dbReference type="InterPro" id="IPR009080">
    <property type="entry name" value="tRNAsynth_Ia_anticodon-bd"/>
</dbReference>
<dbReference type="InterPro" id="IPR009008">
    <property type="entry name" value="Val/Leu/Ile-tRNA-synth_edit"/>
</dbReference>
<dbReference type="NCBIfam" id="TIGR00396">
    <property type="entry name" value="leuS_bact"/>
    <property type="match status" value="1"/>
</dbReference>
<dbReference type="PANTHER" id="PTHR43740:SF2">
    <property type="entry name" value="LEUCINE--TRNA LIGASE, MITOCHONDRIAL"/>
    <property type="match status" value="1"/>
</dbReference>
<dbReference type="PANTHER" id="PTHR43740">
    <property type="entry name" value="LEUCYL-TRNA SYNTHETASE"/>
    <property type="match status" value="1"/>
</dbReference>
<dbReference type="Pfam" id="PF08264">
    <property type="entry name" value="Anticodon_1"/>
    <property type="match status" value="1"/>
</dbReference>
<dbReference type="Pfam" id="PF13603">
    <property type="entry name" value="tRNA-synt_1_2"/>
    <property type="match status" value="1"/>
</dbReference>
<dbReference type="Pfam" id="PF09334">
    <property type="entry name" value="tRNA-synt_1g"/>
    <property type="match status" value="1"/>
</dbReference>
<dbReference type="PRINTS" id="PR00985">
    <property type="entry name" value="TRNASYNTHLEU"/>
</dbReference>
<dbReference type="SUPFAM" id="SSF47323">
    <property type="entry name" value="Anticodon-binding domain of a subclass of class I aminoacyl-tRNA synthetases"/>
    <property type="match status" value="1"/>
</dbReference>
<dbReference type="SUPFAM" id="SSF52374">
    <property type="entry name" value="Nucleotidylyl transferase"/>
    <property type="match status" value="1"/>
</dbReference>
<dbReference type="SUPFAM" id="SSF50677">
    <property type="entry name" value="ValRS/IleRS/LeuRS editing domain"/>
    <property type="match status" value="1"/>
</dbReference>
<dbReference type="PROSITE" id="PS00178">
    <property type="entry name" value="AA_TRNA_LIGASE_I"/>
    <property type="match status" value="1"/>
</dbReference>
<proteinExistence type="inferred from homology"/>
<reference key="1">
    <citation type="submission" date="2006-06" db="EMBL/GenBank/DDBJ databases">
        <title>Complete sequence of chromosome of Mycobacterium sp. MCS.</title>
        <authorList>
            <consortium name="US DOE Joint Genome Institute"/>
            <person name="Copeland A."/>
            <person name="Lucas S."/>
            <person name="Lapidus A."/>
            <person name="Barry K."/>
            <person name="Detter J.C."/>
            <person name="Glavina del Rio T."/>
            <person name="Hammon N."/>
            <person name="Israni S."/>
            <person name="Dalin E."/>
            <person name="Tice H."/>
            <person name="Pitluck S."/>
            <person name="Martinez M."/>
            <person name="Schmutz J."/>
            <person name="Larimer F."/>
            <person name="Land M."/>
            <person name="Hauser L."/>
            <person name="Kyrpides N."/>
            <person name="Kim E."/>
            <person name="Miller C.D."/>
            <person name="Hughes J.E."/>
            <person name="Anderson A.J."/>
            <person name="Sims R.C."/>
            <person name="Richardson P."/>
        </authorList>
    </citation>
    <scope>NUCLEOTIDE SEQUENCE [LARGE SCALE GENOMIC DNA]</scope>
    <source>
        <strain>MCS</strain>
    </source>
</reference>
<keyword id="KW-0030">Aminoacyl-tRNA synthetase</keyword>
<keyword id="KW-0067">ATP-binding</keyword>
<keyword id="KW-0963">Cytoplasm</keyword>
<keyword id="KW-0436">Ligase</keyword>
<keyword id="KW-0547">Nucleotide-binding</keyword>
<keyword id="KW-0648">Protein biosynthesis</keyword>
<accession>Q1B0U5</accession>
<sequence>MTETPTAQPDRAADADTPQHRYTAELAGQIEGAWQQTWAVEGTFNVPNPVGELAPPDGTVPADKMFVQDMFPYPSGEGLHVGHPLGYIATDVYARYYRMTGRNVLHALGFDAFGLPAEQYAVQTGTHPRTRTEANIVNFRRQLGRLGLGHDTRRSFSTTDVDFYTWTQWIFLQIYNAWFDRDANRARPIAELIGEFESGVRTLDDGRPWSELSAGERADVVDSYRLVYRADSMVNWCPGLGTVLANEEVTADGRSDRGNFPVFRKRLRQWMMRITAYSDRLLEDLEVLDWPDKVKTMQRNWIGRSTGASVQFGTDAGDIEVFTTRPDTLFGATYLVLAPEHPLVEQLAAEQWPDDVDGRWTFGATTPREAVAAYRASIAAKSDLERQENKTKTGAFLGAYATNPANGQQVPIFIADYVLIGYGTGAIMAVPGHDQRDWEFAHEFGLPVVEVISGGDISEAAYAGDGLLVNSDYLDGLDVAAAKAAITDRLVADGRGRARVEYKLRDWLFARQRYWGEPFPIVYDSDGRPHPLPESALPVELPDVPDYSPVLFDPDDADSEPNPPLNKATDWVHVELDLGDGLQTYTRDTNVMPQWAGSSWYELRYTDPLNKEALCAKENEAYWMGPQPAEHGPDDPGGVDLYVGGVEHAVLHLLYSRFWHKVLYDLGHVSSREPYRRLVNQGYIQAFAYTDSRGSYVPAAEVVERDGKFWFEGAEVFQEFGKIGKSLKNSVSPDEICDNYGADTLRVYEMSMGPLEASRPWATKDVVGAHRFLQRVWRLVVDEQSGAVRVANHEALDTDTLRALHRTVAGVSEDYAALRNNTAAAKLIEYTNHLTKEGVTARAAIEPLVLMVAPLAPHLAEELWRRLGHDTSLAHGPFPVADPQYLVTDTVEYPVQVNGKVRSRITVDADAGKDTLEAAALADEKVQAFLNGATPKKVIVVPGRLVNLVV</sequence>
<feature type="chain" id="PRO_0000334778" description="Leucine--tRNA ligase">
    <location>
        <begin position="1"/>
        <end position="950"/>
    </location>
</feature>
<feature type="short sequence motif" description="'HIGH' region">
    <location>
        <begin position="72"/>
        <end position="83"/>
    </location>
</feature>
<feature type="short sequence motif" description="'KMSKS' region">
    <location>
        <begin position="722"/>
        <end position="726"/>
    </location>
</feature>
<feature type="binding site" evidence="1">
    <location>
        <position position="725"/>
    </location>
    <ligand>
        <name>ATP</name>
        <dbReference type="ChEBI" id="CHEBI:30616"/>
    </ligand>
</feature>